<evidence type="ECO:0000255" key="1"/>
<evidence type="ECO:0000256" key="2">
    <source>
        <dbReference type="SAM" id="MobiDB-lite"/>
    </source>
</evidence>
<evidence type="ECO:0000305" key="3"/>
<proteinExistence type="predicted"/>
<sequence>MVIPNLHNSIPICGKCDPKLTNSFIGIVLFLAVLIIGILILILFYYNKEINKNSSQYLPIHSPGSGNPSPSSSFLINNNNNNNNYHQNNNSNNNNIIYNPYYNSSTTSPYYLSPNSNHNPSLILYHQSRLLGNIHSINSINNNNNNNNNNPPTNISNKLNKNGETKNI</sequence>
<feature type="chain" id="PRO_0000346990" description="Putative uncharacterized transmembrane protein DDB_G0288353">
    <location>
        <begin position="1"/>
        <end position="168"/>
    </location>
</feature>
<feature type="transmembrane region" description="Helical" evidence="1">
    <location>
        <begin position="24"/>
        <end position="44"/>
    </location>
</feature>
<feature type="region of interest" description="Disordered" evidence="2">
    <location>
        <begin position="69"/>
        <end position="92"/>
    </location>
</feature>
<feature type="region of interest" description="Disordered" evidence="2">
    <location>
        <begin position="142"/>
        <end position="168"/>
    </location>
</feature>
<feature type="compositionally biased region" description="Low complexity" evidence="2">
    <location>
        <begin position="142"/>
        <end position="157"/>
    </location>
</feature>
<accession>Q54J19</accession>
<dbReference type="EMBL" id="AAFI02000111">
    <property type="protein sequence ID" value="EAL63273.1"/>
    <property type="molecule type" value="Genomic_DNA"/>
</dbReference>
<dbReference type="RefSeq" id="XP_636782.1">
    <property type="nucleotide sequence ID" value="XM_631690.1"/>
</dbReference>
<dbReference type="SMR" id="Q54J19"/>
<dbReference type="PaxDb" id="44689-DDB0187905"/>
<dbReference type="EnsemblProtists" id="EAL63273">
    <property type="protein sequence ID" value="EAL63273"/>
    <property type="gene ID" value="DDB_G0288353"/>
</dbReference>
<dbReference type="GeneID" id="8626585"/>
<dbReference type="KEGG" id="ddi:DDB_G0288353"/>
<dbReference type="dictyBase" id="DDB_G0288353"/>
<dbReference type="VEuPathDB" id="AmoebaDB:DDB_G0288353"/>
<dbReference type="HOGENOM" id="CLU_1589463_0_0_1"/>
<dbReference type="InParanoid" id="Q54J19"/>
<dbReference type="PRO" id="PR:Q54J19"/>
<dbReference type="Proteomes" id="UP000002195">
    <property type="component" value="Chromosome 5"/>
</dbReference>
<dbReference type="GO" id="GO:0016020">
    <property type="term" value="C:membrane"/>
    <property type="evidence" value="ECO:0007669"/>
    <property type="project" value="UniProtKB-SubCell"/>
</dbReference>
<keyword id="KW-0472">Membrane</keyword>
<keyword id="KW-1185">Reference proteome</keyword>
<keyword id="KW-0812">Transmembrane</keyword>
<keyword id="KW-1133">Transmembrane helix</keyword>
<comment type="subcellular location">
    <subcellularLocation>
        <location evidence="3">Membrane</location>
        <topology evidence="3">Single-pass membrane protein</topology>
    </subcellularLocation>
</comment>
<gene>
    <name type="ORF">DDB_G0288353</name>
</gene>
<organism>
    <name type="scientific">Dictyostelium discoideum</name>
    <name type="common">Social amoeba</name>
    <dbReference type="NCBI Taxonomy" id="44689"/>
    <lineage>
        <taxon>Eukaryota</taxon>
        <taxon>Amoebozoa</taxon>
        <taxon>Evosea</taxon>
        <taxon>Eumycetozoa</taxon>
        <taxon>Dictyostelia</taxon>
        <taxon>Dictyosteliales</taxon>
        <taxon>Dictyosteliaceae</taxon>
        <taxon>Dictyostelium</taxon>
    </lineage>
</organism>
<name>Y7905_DICDI</name>
<protein>
    <recommendedName>
        <fullName>Putative uncharacterized transmembrane protein DDB_G0288353</fullName>
    </recommendedName>
</protein>
<reference key="1">
    <citation type="journal article" date="2005" name="Nature">
        <title>The genome of the social amoeba Dictyostelium discoideum.</title>
        <authorList>
            <person name="Eichinger L."/>
            <person name="Pachebat J.A."/>
            <person name="Gloeckner G."/>
            <person name="Rajandream M.A."/>
            <person name="Sucgang R."/>
            <person name="Berriman M."/>
            <person name="Song J."/>
            <person name="Olsen R."/>
            <person name="Szafranski K."/>
            <person name="Xu Q."/>
            <person name="Tunggal B."/>
            <person name="Kummerfeld S."/>
            <person name="Madera M."/>
            <person name="Konfortov B.A."/>
            <person name="Rivero F."/>
            <person name="Bankier A.T."/>
            <person name="Lehmann R."/>
            <person name="Hamlin N."/>
            <person name="Davies R."/>
            <person name="Gaudet P."/>
            <person name="Fey P."/>
            <person name="Pilcher K."/>
            <person name="Chen G."/>
            <person name="Saunders D."/>
            <person name="Sodergren E.J."/>
            <person name="Davis P."/>
            <person name="Kerhornou A."/>
            <person name="Nie X."/>
            <person name="Hall N."/>
            <person name="Anjard C."/>
            <person name="Hemphill L."/>
            <person name="Bason N."/>
            <person name="Farbrother P."/>
            <person name="Desany B."/>
            <person name="Just E."/>
            <person name="Morio T."/>
            <person name="Rost R."/>
            <person name="Churcher C.M."/>
            <person name="Cooper J."/>
            <person name="Haydock S."/>
            <person name="van Driessche N."/>
            <person name="Cronin A."/>
            <person name="Goodhead I."/>
            <person name="Muzny D.M."/>
            <person name="Mourier T."/>
            <person name="Pain A."/>
            <person name="Lu M."/>
            <person name="Harper D."/>
            <person name="Lindsay R."/>
            <person name="Hauser H."/>
            <person name="James K.D."/>
            <person name="Quiles M."/>
            <person name="Madan Babu M."/>
            <person name="Saito T."/>
            <person name="Buchrieser C."/>
            <person name="Wardroper A."/>
            <person name="Felder M."/>
            <person name="Thangavelu M."/>
            <person name="Johnson D."/>
            <person name="Knights A."/>
            <person name="Loulseged H."/>
            <person name="Mungall K.L."/>
            <person name="Oliver K."/>
            <person name="Price C."/>
            <person name="Quail M.A."/>
            <person name="Urushihara H."/>
            <person name="Hernandez J."/>
            <person name="Rabbinowitsch E."/>
            <person name="Steffen D."/>
            <person name="Sanders M."/>
            <person name="Ma J."/>
            <person name="Kohara Y."/>
            <person name="Sharp S."/>
            <person name="Simmonds M.N."/>
            <person name="Spiegler S."/>
            <person name="Tivey A."/>
            <person name="Sugano S."/>
            <person name="White B."/>
            <person name="Walker D."/>
            <person name="Woodward J.R."/>
            <person name="Winckler T."/>
            <person name="Tanaka Y."/>
            <person name="Shaulsky G."/>
            <person name="Schleicher M."/>
            <person name="Weinstock G.M."/>
            <person name="Rosenthal A."/>
            <person name="Cox E.C."/>
            <person name="Chisholm R.L."/>
            <person name="Gibbs R.A."/>
            <person name="Loomis W.F."/>
            <person name="Platzer M."/>
            <person name="Kay R.R."/>
            <person name="Williams J.G."/>
            <person name="Dear P.H."/>
            <person name="Noegel A.A."/>
            <person name="Barrell B.G."/>
            <person name="Kuspa A."/>
        </authorList>
    </citation>
    <scope>NUCLEOTIDE SEQUENCE [LARGE SCALE GENOMIC DNA]</scope>
    <source>
        <strain>AX4</strain>
    </source>
</reference>